<feature type="chain" id="PRO_0000295525" description="Small COPII coat GTPase SAR1">
    <location>
        <begin position="1"/>
        <end position="190"/>
    </location>
</feature>
<feature type="binding site" evidence="1">
    <location>
        <begin position="27"/>
        <end position="34"/>
    </location>
    <ligand>
        <name>GTP</name>
        <dbReference type="ChEBI" id="CHEBI:37565"/>
    </ligand>
</feature>
<feature type="binding site" evidence="1">
    <location>
        <begin position="70"/>
        <end position="73"/>
    </location>
    <ligand>
        <name>GTP</name>
        <dbReference type="ChEBI" id="CHEBI:37565"/>
    </ligand>
</feature>
<feature type="binding site" evidence="1">
    <location>
        <begin position="129"/>
        <end position="132"/>
    </location>
    <ligand>
        <name>GTP</name>
        <dbReference type="ChEBI" id="CHEBI:37565"/>
    </ligand>
</feature>
<gene>
    <name type="primary">SAR1</name>
    <name type="ordered locus">YALI0C21824g</name>
</gene>
<sequence length="190" mass="21365">MWIVNWFYDVLSSLGLWNKNAKLLFLGLDNAGKTTLLHMLKNDRMAVSNPTVHPTSEELSIGNCKFTTFDLGGHIQARRVWKDYFPEVNGIVFLVDAADPTRFAESKAELDSLLAIEQLKTVPFLILGNKIDMPQAVSELELKDALGLYQTTGKGKVPLEGNIRPIEIFMCSIVMRQGYGDGIRWLSQYV</sequence>
<dbReference type="EC" id="3.6.5.-"/>
<dbReference type="EMBL" id="CR382129">
    <property type="protein sequence ID" value="CAG82428.1"/>
    <property type="molecule type" value="Genomic_DNA"/>
</dbReference>
<dbReference type="RefSeq" id="XP_502108.1">
    <property type="nucleotide sequence ID" value="XM_502108.1"/>
</dbReference>
<dbReference type="SMR" id="Q6CB54"/>
<dbReference type="FunCoup" id="Q6CB54">
    <property type="interactions" value="942"/>
</dbReference>
<dbReference type="STRING" id="284591.Q6CB54"/>
<dbReference type="EnsemblFungi" id="CAG82428">
    <property type="protein sequence ID" value="CAG82428"/>
    <property type="gene ID" value="YALI0_C21824g"/>
</dbReference>
<dbReference type="KEGG" id="yli:2909835"/>
<dbReference type="VEuPathDB" id="FungiDB:YALI0_C21824g"/>
<dbReference type="HOGENOM" id="CLU_040729_6_0_1"/>
<dbReference type="InParanoid" id="Q6CB54"/>
<dbReference type="OMA" id="GLWNKHG"/>
<dbReference type="OrthoDB" id="68419at4891"/>
<dbReference type="Proteomes" id="UP000001300">
    <property type="component" value="Chromosome C"/>
</dbReference>
<dbReference type="GO" id="GO:0030127">
    <property type="term" value="C:COPII vesicle coat"/>
    <property type="evidence" value="ECO:0000318"/>
    <property type="project" value="GO_Central"/>
</dbReference>
<dbReference type="GO" id="GO:0070971">
    <property type="term" value="C:endoplasmic reticulum exit site"/>
    <property type="evidence" value="ECO:0000318"/>
    <property type="project" value="GO_Central"/>
</dbReference>
<dbReference type="GO" id="GO:0005789">
    <property type="term" value="C:endoplasmic reticulum membrane"/>
    <property type="evidence" value="ECO:0007669"/>
    <property type="project" value="UniProtKB-SubCell"/>
</dbReference>
<dbReference type="GO" id="GO:0000139">
    <property type="term" value="C:Golgi membrane"/>
    <property type="evidence" value="ECO:0007669"/>
    <property type="project" value="UniProtKB-SubCell"/>
</dbReference>
<dbReference type="GO" id="GO:0044233">
    <property type="term" value="C:mitochondria-associated endoplasmic reticulum membrane contact site"/>
    <property type="evidence" value="ECO:0007669"/>
    <property type="project" value="EnsemblFungi"/>
</dbReference>
<dbReference type="GO" id="GO:0005739">
    <property type="term" value="C:mitochondrion"/>
    <property type="evidence" value="ECO:0007669"/>
    <property type="project" value="GOC"/>
</dbReference>
<dbReference type="GO" id="GO:0005525">
    <property type="term" value="F:GTP binding"/>
    <property type="evidence" value="ECO:0007669"/>
    <property type="project" value="UniProtKB-KW"/>
</dbReference>
<dbReference type="GO" id="GO:0003924">
    <property type="term" value="F:GTPase activity"/>
    <property type="evidence" value="ECO:0000318"/>
    <property type="project" value="GO_Central"/>
</dbReference>
<dbReference type="GO" id="GO:0090158">
    <property type="term" value="P:endoplasmic reticulum membrane organization"/>
    <property type="evidence" value="ECO:0007669"/>
    <property type="project" value="EnsemblFungi"/>
</dbReference>
<dbReference type="GO" id="GO:0006888">
    <property type="term" value="P:endoplasmic reticulum to Golgi vesicle-mediated transport"/>
    <property type="evidence" value="ECO:0000318"/>
    <property type="project" value="GO_Central"/>
</dbReference>
<dbReference type="GO" id="GO:0006886">
    <property type="term" value="P:intracellular protein transport"/>
    <property type="evidence" value="ECO:0007669"/>
    <property type="project" value="InterPro"/>
</dbReference>
<dbReference type="GO" id="GO:0061024">
    <property type="term" value="P:membrane organization"/>
    <property type="evidence" value="ECO:0000318"/>
    <property type="project" value="GO_Central"/>
</dbReference>
<dbReference type="GO" id="GO:0000266">
    <property type="term" value="P:mitochondrial fission"/>
    <property type="evidence" value="ECO:0007669"/>
    <property type="project" value="EnsemblFungi"/>
</dbReference>
<dbReference type="GO" id="GO:0007006">
    <property type="term" value="P:mitochondrial membrane organization"/>
    <property type="evidence" value="ECO:0007669"/>
    <property type="project" value="EnsemblFungi"/>
</dbReference>
<dbReference type="GO" id="GO:0006998">
    <property type="term" value="P:nuclear envelope organization"/>
    <property type="evidence" value="ECO:0007669"/>
    <property type="project" value="EnsemblFungi"/>
</dbReference>
<dbReference type="GO" id="GO:1902953">
    <property type="term" value="P:positive regulation of ER to Golgi vesicle-mediated transport"/>
    <property type="evidence" value="ECO:0007669"/>
    <property type="project" value="EnsemblFungi"/>
</dbReference>
<dbReference type="GO" id="GO:0070863">
    <property type="term" value="P:positive regulation of protein exit from endoplasmic reticulum"/>
    <property type="evidence" value="ECO:0007669"/>
    <property type="project" value="EnsemblFungi"/>
</dbReference>
<dbReference type="GO" id="GO:0003400">
    <property type="term" value="P:regulation of COPII vesicle coating"/>
    <property type="evidence" value="ECO:0000318"/>
    <property type="project" value="GO_Central"/>
</dbReference>
<dbReference type="GO" id="GO:0016050">
    <property type="term" value="P:vesicle organization"/>
    <property type="evidence" value="ECO:0000318"/>
    <property type="project" value="GO_Central"/>
</dbReference>
<dbReference type="CDD" id="cd00879">
    <property type="entry name" value="Sar1"/>
    <property type="match status" value="1"/>
</dbReference>
<dbReference type="FunFam" id="3.40.50.300:FF:000161">
    <property type="entry name" value="Small COPII coat GTPase"/>
    <property type="match status" value="1"/>
</dbReference>
<dbReference type="Gene3D" id="3.40.50.300">
    <property type="entry name" value="P-loop containing nucleotide triphosphate hydrolases"/>
    <property type="match status" value="1"/>
</dbReference>
<dbReference type="InterPro" id="IPR027417">
    <property type="entry name" value="P-loop_NTPase"/>
</dbReference>
<dbReference type="InterPro" id="IPR005225">
    <property type="entry name" value="Small_GTP-bd"/>
</dbReference>
<dbReference type="InterPro" id="IPR006689">
    <property type="entry name" value="Small_GTPase_ARF/SAR"/>
</dbReference>
<dbReference type="InterPro" id="IPR006687">
    <property type="entry name" value="Small_GTPase_SAR1"/>
</dbReference>
<dbReference type="NCBIfam" id="TIGR00231">
    <property type="entry name" value="small_GTP"/>
    <property type="match status" value="1"/>
</dbReference>
<dbReference type="PANTHER" id="PTHR45684">
    <property type="entry name" value="RE74312P"/>
    <property type="match status" value="1"/>
</dbReference>
<dbReference type="Pfam" id="PF00025">
    <property type="entry name" value="Arf"/>
    <property type="match status" value="1"/>
</dbReference>
<dbReference type="PRINTS" id="PR00328">
    <property type="entry name" value="SAR1GTPBP"/>
</dbReference>
<dbReference type="SMART" id="SM00177">
    <property type="entry name" value="ARF"/>
    <property type="match status" value="1"/>
</dbReference>
<dbReference type="SMART" id="SM00178">
    <property type="entry name" value="SAR"/>
    <property type="match status" value="1"/>
</dbReference>
<dbReference type="SUPFAM" id="SSF52540">
    <property type="entry name" value="P-loop containing nucleoside triphosphate hydrolases"/>
    <property type="match status" value="1"/>
</dbReference>
<dbReference type="PROSITE" id="PS51422">
    <property type="entry name" value="SAR1"/>
    <property type="match status" value="1"/>
</dbReference>
<name>SAR1_YARLI</name>
<protein>
    <recommendedName>
        <fullName>Small COPII coat GTPase SAR1</fullName>
        <ecNumber>3.6.5.-</ecNumber>
    </recommendedName>
</protein>
<organism>
    <name type="scientific">Yarrowia lipolytica (strain CLIB 122 / E 150)</name>
    <name type="common">Yeast</name>
    <name type="synonym">Candida lipolytica</name>
    <dbReference type="NCBI Taxonomy" id="284591"/>
    <lineage>
        <taxon>Eukaryota</taxon>
        <taxon>Fungi</taxon>
        <taxon>Dikarya</taxon>
        <taxon>Ascomycota</taxon>
        <taxon>Saccharomycotina</taxon>
        <taxon>Dipodascomycetes</taxon>
        <taxon>Dipodascales</taxon>
        <taxon>Dipodascales incertae sedis</taxon>
        <taxon>Yarrowia</taxon>
    </lineage>
</organism>
<comment type="function">
    <text evidence="1">Small GTPase component of the coat protein complex II (COPII) which promotes the formation of transport vesicles from the endoplasmic reticulum (ER). The coat has two main functions, the physical deformation of the endoplasmic reticulum membrane into vesicles and the selection of cargo molecules. SAR1 controls the coat assembly in a stepwise manner. Activated SAR1-GTP binds to membranes first and recruits the SEC23/24 complex. These SEC23/24-SAR1 prebudding intermediates are then collected by the SEC13/31 complex as subunits polymerize to form coated transport vesicles. Conversion to SAR1-GDP triggers coat release and recycles COPII subunits (By similarity).</text>
</comment>
<comment type="catalytic activity">
    <reaction>
        <text>GTP + H2O = GDP + phosphate + H(+)</text>
        <dbReference type="Rhea" id="RHEA:19669"/>
        <dbReference type="ChEBI" id="CHEBI:15377"/>
        <dbReference type="ChEBI" id="CHEBI:15378"/>
        <dbReference type="ChEBI" id="CHEBI:37565"/>
        <dbReference type="ChEBI" id="CHEBI:43474"/>
        <dbReference type="ChEBI" id="CHEBI:58189"/>
    </reaction>
</comment>
<comment type="subunit">
    <text evidence="1">COPII is composed of at least 5 proteins: the SEC23/24 complex, the SEC13/31 complex and SAR1.</text>
</comment>
<comment type="subcellular location">
    <subcellularLocation>
        <location evidence="1">Cytoplasmic vesicle</location>
        <location evidence="1">COPII-coated vesicle membrane</location>
        <topology evidence="1">Peripheral membrane protein</topology>
        <orientation evidence="1">Cytoplasmic side</orientation>
    </subcellularLocation>
    <subcellularLocation>
        <location evidence="1">Endoplasmic reticulum membrane</location>
        <topology evidence="1">Peripheral membrane protein</topology>
        <orientation evidence="1">Cytoplasmic side</orientation>
    </subcellularLocation>
    <subcellularLocation>
        <location evidence="1">Golgi apparatus membrane</location>
        <topology evidence="1">Peripheral membrane protein</topology>
        <orientation evidence="1">Cytoplasmic side</orientation>
    </subcellularLocation>
</comment>
<comment type="similarity">
    <text evidence="2">Belongs to the small GTPase superfamily. SAR1 family.</text>
</comment>
<reference key="1">
    <citation type="journal article" date="2004" name="Nature">
        <title>Genome evolution in yeasts.</title>
        <authorList>
            <person name="Dujon B."/>
            <person name="Sherman D."/>
            <person name="Fischer G."/>
            <person name="Durrens P."/>
            <person name="Casaregola S."/>
            <person name="Lafontaine I."/>
            <person name="de Montigny J."/>
            <person name="Marck C."/>
            <person name="Neuveglise C."/>
            <person name="Talla E."/>
            <person name="Goffard N."/>
            <person name="Frangeul L."/>
            <person name="Aigle M."/>
            <person name="Anthouard V."/>
            <person name="Babour A."/>
            <person name="Barbe V."/>
            <person name="Barnay S."/>
            <person name="Blanchin S."/>
            <person name="Beckerich J.-M."/>
            <person name="Beyne E."/>
            <person name="Bleykasten C."/>
            <person name="Boisrame A."/>
            <person name="Boyer J."/>
            <person name="Cattolico L."/>
            <person name="Confanioleri F."/>
            <person name="de Daruvar A."/>
            <person name="Despons L."/>
            <person name="Fabre E."/>
            <person name="Fairhead C."/>
            <person name="Ferry-Dumazet H."/>
            <person name="Groppi A."/>
            <person name="Hantraye F."/>
            <person name="Hennequin C."/>
            <person name="Jauniaux N."/>
            <person name="Joyet P."/>
            <person name="Kachouri R."/>
            <person name="Kerrest A."/>
            <person name="Koszul R."/>
            <person name="Lemaire M."/>
            <person name="Lesur I."/>
            <person name="Ma L."/>
            <person name="Muller H."/>
            <person name="Nicaud J.-M."/>
            <person name="Nikolski M."/>
            <person name="Oztas S."/>
            <person name="Ozier-Kalogeropoulos O."/>
            <person name="Pellenz S."/>
            <person name="Potier S."/>
            <person name="Richard G.-F."/>
            <person name="Straub M.-L."/>
            <person name="Suleau A."/>
            <person name="Swennen D."/>
            <person name="Tekaia F."/>
            <person name="Wesolowski-Louvel M."/>
            <person name="Westhof E."/>
            <person name="Wirth B."/>
            <person name="Zeniou-Meyer M."/>
            <person name="Zivanovic Y."/>
            <person name="Bolotin-Fukuhara M."/>
            <person name="Thierry A."/>
            <person name="Bouchier C."/>
            <person name="Caudron B."/>
            <person name="Scarpelli C."/>
            <person name="Gaillardin C."/>
            <person name="Weissenbach J."/>
            <person name="Wincker P."/>
            <person name="Souciet J.-L."/>
        </authorList>
    </citation>
    <scope>NUCLEOTIDE SEQUENCE [LARGE SCALE GENOMIC DNA]</scope>
    <source>
        <strain>CLIB 122 / E 150</strain>
    </source>
</reference>
<keyword id="KW-0968">Cytoplasmic vesicle</keyword>
<keyword id="KW-0256">Endoplasmic reticulum</keyword>
<keyword id="KW-0931">ER-Golgi transport</keyword>
<keyword id="KW-0333">Golgi apparatus</keyword>
<keyword id="KW-0342">GTP-binding</keyword>
<keyword id="KW-0378">Hydrolase</keyword>
<keyword id="KW-0472">Membrane</keyword>
<keyword id="KW-0547">Nucleotide-binding</keyword>
<keyword id="KW-0653">Protein transport</keyword>
<keyword id="KW-1185">Reference proteome</keyword>
<keyword id="KW-0813">Transport</keyword>
<accession>Q6CB54</accession>
<evidence type="ECO:0000250" key="1"/>
<evidence type="ECO:0000305" key="2"/>
<proteinExistence type="inferred from homology"/>